<gene>
    <name evidence="1" type="primary">rplO</name>
    <name type="ordered locus">MSC_0727</name>
</gene>
<proteinExistence type="inferred from homology"/>
<dbReference type="EMBL" id="BX293980">
    <property type="protein sequence ID" value="CAE77345.1"/>
    <property type="molecule type" value="Genomic_DNA"/>
</dbReference>
<dbReference type="RefSeq" id="NP_975703.1">
    <property type="nucleotide sequence ID" value="NC_005364.2"/>
</dbReference>
<dbReference type="RefSeq" id="WP_011166895.1">
    <property type="nucleotide sequence ID" value="NC_005364.2"/>
</dbReference>
<dbReference type="SMR" id="Q6MSP3"/>
<dbReference type="STRING" id="272632.MSC_0727"/>
<dbReference type="GeneID" id="93426150"/>
<dbReference type="KEGG" id="mmy:MSC_0727"/>
<dbReference type="PATRIC" id="fig|272632.4.peg.784"/>
<dbReference type="eggNOG" id="COG0200">
    <property type="taxonomic scope" value="Bacteria"/>
</dbReference>
<dbReference type="HOGENOM" id="CLU_055188_4_2_14"/>
<dbReference type="Proteomes" id="UP000001016">
    <property type="component" value="Chromosome"/>
</dbReference>
<dbReference type="GO" id="GO:0022625">
    <property type="term" value="C:cytosolic large ribosomal subunit"/>
    <property type="evidence" value="ECO:0007669"/>
    <property type="project" value="TreeGrafter"/>
</dbReference>
<dbReference type="GO" id="GO:0019843">
    <property type="term" value="F:rRNA binding"/>
    <property type="evidence" value="ECO:0007669"/>
    <property type="project" value="UniProtKB-UniRule"/>
</dbReference>
<dbReference type="GO" id="GO:0003735">
    <property type="term" value="F:structural constituent of ribosome"/>
    <property type="evidence" value="ECO:0007669"/>
    <property type="project" value="InterPro"/>
</dbReference>
<dbReference type="GO" id="GO:0006412">
    <property type="term" value="P:translation"/>
    <property type="evidence" value="ECO:0007669"/>
    <property type="project" value="UniProtKB-UniRule"/>
</dbReference>
<dbReference type="Gene3D" id="3.100.10.10">
    <property type="match status" value="1"/>
</dbReference>
<dbReference type="HAMAP" id="MF_01341">
    <property type="entry name" value="Ribosomal_uL15"/>
    <property type="match status" value="1"/>
</dbReference>
<dbReference type="InterPro" id="IPR030878">
    <property type="entry name" value="Ribosomal_uL15"/>
</dbReference>
<dbReference type="InterPro" id="IPR021131">
    <property type="entry name" value="Ribosomal_uL15/eL18"/>
</dbReference>
<dbReference type="InterPro" id="IPR036227">
    <property type="entry name" value="Ribosomal_uL15/eL18_sf"/>
</dbReference>
<dbReference type="InterPro" id="IPR005749">
    <property type="entry name" value="Ribosomal_uL15_bac-type"/>
</dbReference>
<dbReference type="InterPro" id="IPR001196">
    <property type="entry name" value="Ribosomal_uL15_CS"/>
</dbReference>
<dbReference type="NCBIfam" id="TIGR01071">
    <property type="entry name" value="rplO_bact"/>
    <property type="match status" value="1"/>
</dbReference>
<dbReference type="PANTHER" id="PTHR12934">
    <property type="entry name" value="50S RIBOSOMAL PROTEIN L15"/>
    <property type="match status" value="1"/>
</dbReference>
<dbReference type="PANTHER" id="PTHR12934:SF11">
    <property type="entry name" value="LARGE RIBOSOMAL SUBUNIT PROTEIN UL15M"/>
    <property type="match status" value="1"/>
</dbReference>
<dbReference type="Pfam" id="PF00828">
    <property type="entry name" value="Ribosomal_L27A"/>
    <property type="match status" value="1"/>
</dbReference>
<dbReference type="SUPFAM" id="SSF52080">
    <property type="entry name" value="Ribosomal proteins L15p and L18e"/>
    <property type="match status" value="1"/>
</dbReference>
<dbReference type="PROSITE" id="PS00475">
    <property type="entry name" value="RIBOSOMAL_L15"/>
    <property type="match status" value="1"/>
</dbReference>
<sequence>MKLNELKYTPGSKTKATIVGRGMASGKGKTATRGHKGQNSRSGGGVRPGFEGGQTPLFRRLPKVGFTSLNQKQYTILNLSDLETLGLEKIDHESLINSKIIKNNASLIKILANGTLTKKVDVKVNKISKAAKDAIEKLGGKVEVI</sequence>
<protein>
    <recommendedName>
        <fullName evidence="1">Large ribosomal subunit protein uL15</fullName>
    </recommendedName>
    <alternativeName>
        <fullName evidence="3">50S ribosomal protein L15</fullName>
    </alternativeName>
</protein>
<keyword id="KW-1185">Reference proteome</keyword>
<keyword id="KW-0687">Ribonucleoprotein</keyword>
<keyword id="KW-0689">Ribosomal protein</keyword>
<keyword id="KW-0694">RNA-binding</keyword>
<keyword id="KW-0699">rRNA-binding</keyword>
<accession>Q6MSP3</accession>
<reference key="1">
    <citation type="journal article" date="2004" name="Genome Res.">
        <title>The genome sequence of Mycoplasma mycoides subsp. mycoides SC type strain PG1T, the causative agent of contagious bovine pleuropneumonia (CBPP).</title>
        <authorList>
            <person name="Westberg J."/>
            <person name="Persson A."/>
            <person name="Holmberg A."/>
            <person name="Goesmann A."/>
            <person name="Lundeberg J."/>
            <person name="Johansson K.-E."/>
            <person name="Pettersson B."/>
            <person name="Uhlen M."/>
        </authorList>
    </citation>
    <scope>NUCLEOTIDE SEQUENCE [LARGE SCALE GENOMIC DNA]</scope>
    <source>
        <strain>CCUG 32753 / NCTC 10114 / PG1</strain>
    </source>
</reference>
<organism>
    <name type="scientific">Mycoplasma mycoides subsp. mycoides SC (strain CCUG 32753 / NCTC 10114 / PG1)</name>
    <dbReference type="NCBI Taxonomy" id="272632"/>
    <lineage>
        <taxon>Bacteria</taxon>
        <taxon>Bacillati</taxon>
        <taxon>Mycoplasmatota</taxon>
        <taxon>Mollicutes</taxon>
        <taxon>Mycoplasmataceae</taxon>
        <taxon>Mycoplasma</taxon>
    </lineage>
</organism>
<name>RL15_MYCMS</name>
<feature type="chain" id="PRO_0000104763" description="Large ribosomal subunit protein uL15">
    <location>
        <begin position="1"/>
        <end position="145"/>
    </location>
</feature>
<feature type="region of interest" description="Disordered" evidence="2">
    <location>
        <begin position="20"/>
        <end position="54"/>
    </location>
</feature>
<feature type="compositionally biased region" description="Gly residues" evidence="2">
    <location>
        <begin position="42"/>
        <end position="52"/>
    </location>
</feature>
<comment type="function">
    <text evidence="1">Binds to the 23S rRNA.</text>
</comment>
<comment type="subunit">
    <text evidence="1">Part of the 50S ribosomal subunit.</text>
</comment>
<comment type="similarity">
    <text evidence="1">Belongs to the universal ribosomal protein uL15 family.</text>
</comment>
<evidence type="ECO:0000255" key="1">
    <source>
        <dbReference type="HAMAP-Rule" id="MF_01341"/>
    </source>
</evidence>
<evidence type="ECO:0000256" key="2">
    <source>
        <dbReference type="SAM" id="MobiDB-lite"/>
    </source>
</evidence>
<evidence type="ECO:0000305" key="3"/>